<reference key="1">
    <citation type="journal article" date="2006" name="FEBS Lett.">
        <title>Afaf, a novel vesicle membrane protein, is related to acrosome formation in murine testis.</title>
        <authorList>
            <person name="Li Y.-C."/>
            <person name="Hu X.-Q."/>
            <person name="Zhang K.-Y."/>
            <person name="Guo J."/>
            <person name="Hu Z.-Y."/>
            <person name="Tao S.-X."/>
            <person name="Xiao L.-J."/>
            <person name="Wang Q.-Z."/>
            <person name="Han C.-S."/>
            <person name="Liu Y.-X."/>
        </authorList>
    </citation>
    <scope>NUCLEOTIDE SEQUENCE [MRNA] (ISOFORM 2)</scope>
    <scope>FUNCTION</scope>
    <scope>ALTERNATIVE SPLICING</scope>
    <scope>SUBCELLULAR LOCATION</scope>
    <scope>TISSUE SPECIFICITY</scope>
    <source>
        <strain>CD-1</strain>
        <tissue>Testis</tissue>
    </source>
</reference>
<reference key="2">
    <citation type="journal article" date="2005" name="Science">
        <title>The transcriptional landscape of the mammalian genome.</title>
        <authorList>
            <person name="Carninci P."/>
            <person name="Kasukawa T."/>
            <person name="Katayama S."/>
            <person name="Gough J."/>
            <person name="Frith M.C."/>
            <person name="Maeda N."/>
            <person name="Oyama R."/>
            <person name="Ravasi T."/>
            <person name="Lenhard B."/>
            <person name="Wells C."/>
            <person name="Kodzius R."/>
            <person name="Shimokawa K."/>
            <person name="Bajic V.B."/>
            <person name="Brenner S.E."/>
            <person name="Batalov S."/>
            <person name="Forrest A.R."/>
            <person name="Zavolan M."/>
            <person name="Davis M.J."/>
            <person name="Wilming L.G."/>
            <person name="Aidinis V."/>
            <person name="Allen J.E."/>
            <person name="Ambesi-Impiombato A."/>
            <person name="Apweiler R."/>
            <person name="Aturaliya R.N."/>
            <person name="Bailey T.L."/>
            <person name="Bansal M."/>
            <person name="Baxter L."/>
            <person name="Beisel K.W."/>
            <person name="Bersano T."/>
            <person name="Bono H."/>
            <person name="Chalk A.M."/>
            <person name="Chiu K.P."/>
            <person name="Choudhary V."/>
            <person name="Christoffels A."/>
            <person name="Clutterbuck D.R."/>
            <person name="Crowe M.L."/>
            <person name="Dalla E."/>
            <person name="Dalrymple B.P."/>
            <person name="de Bono B."/>
            <person name="Della Gatta G."/>
            <person name="di Bernardo D."/>
            <person name="Down T."/>
            <person name="Engstrom P."/>
            <person name="Fagiolini M."/>
            <person name="Faulkner G."/>
            <person name="Fletcher C.F."/>
            <person name="Fukushima T."/>
            <person name="Furuno M."/>
            <person name="Futaki S."/>
            <person name="Gariboldi M."/>
            <person name="Georgii-Hemming P."/>
            <person name="Gingeras T.R."/>
            <person name="Gojobori T."/>
            <person name="Green R.E."/>
            <person name="Gustincich S."/>
            <person name="Harbers M."/>
            <person name="Hayashi Y."/>
            <person name="Hensch T.K."/>
            <person name="Hirokawa N."/>
            <person name="Hill D."/>
            <person name="Huminiecki L."/>
            <person name="Iacono M."/>
            <person name="Ikeo K."/>
            <person name="Iwama A."/>
            <person name="Ishikawa T."/>
            <person name="Jakt M."/>
            <person name="Kanapin A."/>
            <person name="Katoh M."/>
            <person name="Kawasawa Y."/>
            <person name="Kelso J."/>
            <person name="Kitamura H."/>
            <person name="Kitano H."/>
            <person name="Kollias G."/>
            <person name="Krishnan S.P."/>
            <person name="Kruger A."/>
            <person name="Kummerfeld S.K."/>
            <person name="Kurochkin I.V."/>
            <person name="Lareau L.F."/>
            <person name="Lazarevic D."/>
            <person name="Lipovich L."/>
            <person name="Liu J."/>
            <person name="Liuni S."/>
            <person name="McWilliam S."/>
            <person name="Madan Babu M."/>
            <person name="Madera M."/>
            <person name="Marchionni L."/>
            <person name="Matsuda H."/>
            <person name="Matsuzawa S."/>
            <person name="Miki H."/>
            <person name="Mignone F."/>
            <person name="Miyake S."/>
            <person name="Morris K."/>
            <person name="Mottagui-Tabar S."/>
            <person name="Mulder N."/>
            <person name="Nakano N."/>
            <person name="Nakauchi H."/>
            <person name="Ng P."/>
            <person name="Nilsson R."/>
            <person name="Nishiguchi S."/>
            <person name="Nishikawa S."/>
            <person name="Nori F."/>
            <person name="Ohara O."/>
            <person name="Okazaki Y."/>
            <person name="Orlando V."/>
            <person name="Pang K.C."/>
            <person name="Pavan W.J."/>
            <person name="Pavesi G."/>
            <person name="Pesole G."/>
            <person name="Petrovsky N."/>
            <person name="Piazza S."/>
            <person name="Reed J."/>
            <person name="Reid J.F."/>
            <person name="Ring B.Z."/>
            <person name="Ringwald M."/>
            <person name="Rost B."/>
            <person name="Ruan Y."/>
            <person name="Salzberg S.L."/>
            <person name="Sandelin A."/>
            <person name="Schneider C."/>
            <person name="Schoenbach C."/>
            <person name="Sekiguchi K."/>
            <person name="Semple C.A."/>
            <person name="Seno S."/>
            <person name="Sessa L."/>
            <person name="Sheng Y."/>
            <person name="Shibata Y."/>
            <person name="Shimada H."/>
            <person name="Shimada K."/>
            <person name="Silva D."/>
            <person name="Sinclair B."/>
            <person name="Sperling S."/>
            <person name="Stupka E."/>
            <person name="Sugiura K."/>
            <person name="Sultana R."/>
            <person name="Takenaka Y."/>
            <person name="Taki K."/>
            <person name="Tammoja K."/>
            <person name="Tan S.L."/>
            <person name="Tang S."/>
            <person name="Taylor M.S."/>
            <person name="Tegner J."/>
            <person name="Teichmann S.A."/>
            <person name="Ueda H.R."/>
            <person name="van Nimwegen E."/>
            <person name="Verardo R."/>
            <person name="Wei C.L."/>
            <person name="Yagi K."/>
            <person name="Yamanishi H."/>
            <person name="Zabarovsky E."/>
            <person name="Zhu S."/>
            <person name="Zimmer A."/>
            <person name="Hide W."/>
            <person name="Bult C."/>
            <person name="Grimmond S.M."/>
            <person name="Teasdale R.D."/>
            <person name="Liu E.T."/>
            <person name="Brusic V."/>
            <person name="Quackenbush J."/>
            <person name="Wahlestedt C."/>
            <person name="Mattick J.S."/>
            <person name="Hume D.A."/>
            <person name="Kai C."/>
            <person name="Sasaki D."/>
            <person name="Tomaru Y."/>
            <person name="Fukuda S."/>
            <person name="Kanamori-Katayama M."/>
            <person name="Suzuki M."/>
            <person name="Aoki J."/>
            <person name="Arakawa T."/>
            <person name="Iida J."/>
            <person name="Imamura K."/>
            <person name="Itoh M."/>
            <person name="Kato T."/>
            <person name="Kawaji H."/>
            <person name="Kawagashira N."/>
            <person name="Kawashima T."/>
            <person name="Kojima M."/>
            <person name="Kondo S."/>
            <person name="Konno H."/>
            <person name="Nakano K."/>
            <person name="Ninomiya N."/>
            <person name="Nishio T."/>
            <person name="Okada M."/>
            <person name="Plessy C."/>
            <person name="Shibata K."/>
            <person name="Shiraki T."/>
            <person name="Suzuki S."/>
            <person name="Tagami M."/>
            <person name="Waki K."/>
            <person name="Watahiki A."/>
            <person name="Okamura-Oho Y."/>
            <person name="Suzuki H."/>
            <person name="Kawai J."/>
            <person name="Hayashizaki Y."/>
        </authorList>
    </citation>
    <scope>NUCLEOTIDE SEQUENCE [LARGE SCALE MRNA] (ISOFORM 1)</scope>
    <source>
        <strain>C57BL/6J</strain>
        <tissue>Testis</tissue>
    </source>
</reference>
<reference key="3">
    <citation type="journal article" date="2009" name="PLoS Biol.">
        <title>Lineage-specific biology revealed by a finished genome assembly of the mouse.</title>
        <authorList>
            <person name="Church D.M."/>
            <person name="Goodstadt L."/>
            <person name="Hillier L.W."/>
            <person name="Zody M.C."/>
            <person name="Goldstein S."/>
            <person name="She X."/>
            <person name="Bult C.J."/>
            <person name="Agarwala R."/>
            <person name="Cherry J.L."/>
            <person name="DiCuccio M."/>
            <person name="Hlavina W."/>
            <person name="Kapustin Y."/>
            <person name="Meric P."/>
            <person name="Maglott D."/>
            <person name="Birtle Z."/>
            <person name="Marques A.C."/>
            <person name="Graves T."/>
            <person name="Zhou S."/>
            <person name="Teague B."/>
            <person name="Potamousis K."/>
            <person name="Churas C."/>
            <person name="Place M."/>
            <person name="Herschleb J."/>
            <person name="Runnheim R."/>
            <person name="Forrest D."/>
            <person name="Amos-Landgraf J."/>
            <person name="Schwartz D.C."/>
            <person name="Cheng Z."/>
            <person name="Lindblad-Toh K."/>
            <person name="Eichler E.E."/>
            <person name="Ponting C.P."/>
        </authorList>
    </citation>
    <scope>NUCLEOTIDE SEQUENCE [LARGE SCALE GENOMIC DNA]</scope>
    <source>
        <strain>C57BL/6J</strain>
    </source>
</reference>
<reference key="4">
    <citation type="journal article" date="2004" name="Genome Res.">
        <title>The status, quality, and expansion of the NIH full-length cDNA project: the Mammalian Gene Collection (MGC).</title>
        <authorList>
            <consortium name="The MGC Project Team"/>
        </authorList>
    </citation>
    <scope>NUCLEOTIDE SEQUENCE [LARGE SCALE MRNA] (ISOFORM 1)</scope>
    <source>
        <tissue>Testis</tissue>
    </source>
</reference>
<reference key="5">
    <citation type="journal article" date="1998" name="Biol. Reprod.">
        <title>An MN9 antigenic molecule, equatorin, is required for successful sperm-oocyte fusion in mice.</title>
        <authorList>
            <person name="Toshimori K."/>
            <person name="Saxena D.K."/>
            <person name="Tanii I."/>
            <person name="Yoshinaga K."/>
        </authorList>
    </citation>
    <scope>FUNCTION</scope>
</reference>
<reference key="6">
    <citation type="journal article" date="2009" name="Biol. Reprod.">
        <title>Equatorin: identification and characterization of the epitope of the MN9 antibody in the mouse.</title>
        <authorList>
            <person name="Yamatoya K."/>
            <person name="Yoshida K."/>
            <person name="Ito C."/>
            <person name="Maekawa M."/>
            <person name="Yanagida M."/>
            <person name="Takamori K."/>
            <person name="Ogawa H."/>
            <person name="Araki Y."/>
            <person name="Miyado K."/>
            <person name="Toyama Y."/>
            <person name="Toshimori K."/>
        </authorList>
    </citation>
    <scope>CHARACTERIZATION OF THE EPITOPE</scope>
    <scope>TISSUE SPECIFICITY</scope>
    <scope>SUBCELLULAR LOCATION</scope>
    <scope>GLYCOSYLATION</scope>
    <scope>MUTAGENESIS OF THR-128; SER-129; THR-130; THR-138 AND SER-141</scope>
    <scope>IDENTIFICATION BY MASS SPECTROMETRY</scope>
</reference>
<reference key="7">
    <citation type="journal article" date="2010" name="Fertil. Steril.">
        <title>Acrosome formation-associated factor is involved in fertilization.</title>
        <authorList>
            <person name="Hu X.Q."/>
            <person name="Ji S.Y."/>
            <person name="Li Y.C."/>
            <person name="Fan C.H."/>
            <person name="Cai H."/>
            <person name="Yang J.L."/>
            <person name="Zhang C.P."/>
            <person name="Chen M."/>
            <person name="Pan Z.F."/>
            <person name="Hu Z.Y."/>
            <person name="Gao F."/>
            <person name="Liu Y.X."/>
        </authorList>
    </citation>
    <scope>INTERACTION WITH SNAP25</scope>
    <scope>FUNCTION</scope>
</reference>
<gene>
    <name type="primary">Eqtn</name>
    <name type="synonym">Afaf</name>
    <name type="synonym">Mn9</name>
</gene>
<evidence type="ECO:0000250" key="1">
    <source>
        <dbReference type="UniProtKB" id="Q2LCV6"/>
    </source>
</evidence>
<evidence type="ECO:0000255" key="2"/>
<evidence type="ECO:0000256" key="3">
    <source>
        <dbReference type="SAM" id="MobiDB-lite"/>
    </source>
</evidence>
<evidence type="ECO:0000269" key="4">
    <source>
    </source>
</evidence>
<evidence type="ECO:0000269" key="5">
    <source>
    </source>
</evidence>
<evidence type="ECO:0000269" key="6">
    <source>
    </source>
</evidence>
<evidence type="ECO:0000269" key="7">
    <source>
    </source>
</evidence>
<evidence type="ECO:0000303" key="8">
    <source>
    </source>
</evidence>
<evidence type="ECO:0000305" key="9"/>
<keyword id="KW-0025">Alternative splicing</keyword>
<keyword id="KW-0963">Cytoplasm</keyword>
<keyword id="KW-0968">Cytoplasmic vesicle</keyword>
<keyword id="KW-0325">Glycoprotein</keyword>
<keyword id="KW-0472">Membrane</keyword>
<keyword id="KW-0539">Nucleus</keyword>
<keyword id="KW-0597">Phosphoprotein</keyword>
<keyword id="KW-1185">Reference proteome</keyword>
<keyword id="KW-0732">Signal</keyword>
<keyword id="KW-0812">Transmembrane</keyword>
<keyword id="KW-1133">Transmembrane helix</keyword>
<name>EQTN_MOUSE</name>
<organism>
    <name type="scientific">Mus musculus</name>
    <name type="common">Mouse</name>
    <dbReference type="NCBI Taxonomy" id="10090"/>
    <lineage>
        <taxon>Eukaryota</taxon>
        <taxon>Metazoa</taxon>
        <taxon>Chordata</taxon>
        <taxon>Craniata</taxon>
        <taxon>Vertebrata</taxon>
        <taxon>Euteleostomi</taxon>
        <taxon>Mammalia</taxon>
        <taxon>Eutheria</taxon>
        <taxon>Euarchontoglires</taxon>
        <taxon>Glires</taxon>
        <taxon>Rodentia</taxon>
        <taxon>Myomorpha</taxon>
        <taxon>Muroidea</taxon>
        <taxon>Muridae</taxon>
        <taxon>Murinae</taxon>
        <taxon>Mus</taxon>
        <taxon>Mus</taxon>
    </lineage>
</organism>
<feature type="signal peptide" evidence="2">
    <location>
        <begin position="1"/>
        <end position="20"/>
    </location>
</feature>
<feature type="chain" id="PRO_0000286594" description="Equatorin">
    <location>
        <begin position="21"/>
        <end position="337"/>
    </location>
</feature>
<feature type="topological domain" description="Lumenal" evidence="9">
    <location>
        <begin position="21"/>
        <end position="183"/>
    </location>
</feature>
<feature type="transmembrane region" description="Helical" evidence="2">
    <location>
        <begin position="184"/>
        <end position="204"/>
    </location>
</feature>
<feature type="topological domain" description="Cytoplasmic" evidence="9">
    <location>
        <begin position="205"/>
        <end position="337"/>
    </location>
</feature>
<feature type="region of interest" description="Disordered" evidence="3">
    <location>
        <begin position="110"/>
        <end position="130"/>
    </location>
</feature>
<feature type="region of interest" description="Disordered" evidence="3">
    <location>
        <begin position="259"/>
        <end position="283"/>
    </location>
</feature>
<feature type="compositionally biased region" description="Basic and acidic residues" evidence="3">
    <location>
        <begin position="117"/>
        <end position="126"/>
    </location>
</feature>
<feature type="modified residue" description="Phosphoserine" evidence="1">
    <location>
        <position position="336"/>
    </location>
</feature>
<feature type="glycosylation site" description="N-linked (GlcNAc...) asparagine" evidence="2">
    <location>
        <position position="145"/>
    </location>
</feature>
<feature type="splice variant" id="VSP_025111" description="In isoform 2." evidence="8">
    <location>
        <begin position="239"/>
        <end position="279"/>
    </location>
</feature>
<feature type="mutagenesis site" description="Does not affect MN9 antibody detectability." evidence="6">
    <original>T</original>
    <variation>A</variation>
    <location>
        <position position="128"/>
    </location>
</feature>
<feature type="mutagenesis site" description="Does not affect MN9 antibody detectability." evidence="6">
    <original>S</original>
    <variation>A</variation>
    <location>
        <position position="129"/>
    </location>
</feature>
<feature type="mutagenesis site" description="Does not affect MN9 antibody detectability." evidence="6">
    <original>T</original>
    <variation>A</variation>
    <location>
        <position position="130"/>
    </location>
</feature>
<feature type="mutagenesis site" description="MN9 antibody detectability is lost." evidence="6">
    <original>T</original>
    <variation>A</variation>
    <location>
        <position position="138"/>
    </location>
</feature>
<feature type="mutagenesis site" description="Does not affect MN9 antibody detectability." evidence="6">
    <original>S</original>
    <variation>A</variation>
    <location>
        <position position="141"/>
    </location>
</feature>
<feature type="sequence conflict" description="In Ref. 1; ABC69297 and 2; BAB24593." evidence="9" ref="1 2">
    <original>R</original>
    <variation>S</variation>
    <location>
        <position position="214"/>
    </location>
</feature>
<feature type="sequence conflict" description="In Ref. 1; ABC69297 and 2; BAB24593." evidence="9" ref="1 2">
    <original>A</original>
    <variation>H</variation>
    <location>
        <position position="325"/>
    </location>
</feature>
<comment type="function">
    <text evidence="4 5 7">Acrosomal membrane-anchored protein involved in the process of fertilization and in acrosome biogenesis.</text>
</comment>
<comment type="subunit">
    <text evidence="5">Interacts with SNAP25.</text>
</comment>
<comment type="subcellular location">
    <molecule>Isoform 1</molecule>
    <subcellularLocation>
        <location>Cytoplasmic vesicle</location>
        <location>Secretory vesicle</location>
        <location>Acrosome membrane</location>
        <topology>Single-pass type I membrane protein</topology>
    </subcellularLocation>
    <subcellularLocation>
        <location>Cytoplasmic vesicle</location>
        <location>Secretory vesicle</location>
        <location>Acrosome inner membrane</location>
        <topology>Single-pass type I membrane protein</topology>
    </subcellularLocation>
    <subcellularLocation>
        <location>Cytoplasmic vesicle</location>
        <location>Secretory vesicle</location>
        <location>Acrosome outer membrane</location>
        <topology>Single-pass type I membrane protein</topology>
    </subcellularLocation>
    <text>In the anterior acrosome region, enriched on the inner acrosomal membrane but minimal on the outer acrosomal membrane; in contrast in the posterior acrosome region enriched on both the inner and outer acrosomal membranes.</text>
</comment>
<comment type="subcellular location">
    <molecule>Isoform 2</molecule>
    <subcellularLocation>
        <location>Nucleus</location>
    </subcellularLocation>
    <subcellularLocation>
        <location>Cytoplasm</location>
    </subcellularLocation>
</comment>
<comment type="alternative products">
    <event type="alternative splicing"/>
    <isoform>
        <id>Q9D9V2-1</id>
        <name>1</name>
        <sequence type="displayed"/>
    </isoform>
    <isoform>
        <id>Q9D9V2-2</id>
        <name>2</name>
        <sequence type="described" ref="VSP_025111"/>
    </isoform>
</comment>
<comment type="tissue specificity">
    <text evidence="4 6">Sperm specific, including germ cells (at protein level).</text>
</comment>
<comment type="PTM">
    <text evidence="6">Highly N- and O-glycosylated; contains sialic acid. MN9 epitope is O-glycosylated.</text>
</comment>
<protein>
    <recommendedName>
        <fullName>Equatorin</fullName>
    </recommendedName>
    <alternativeName>
        <fullName>Acrosome formation-associated factor</fullName>
    </alternativeName>
    <alternativeName>
        <fullName>MN9 antigen</fullName>
    </alternativeName>
</protein>
<proteinExistence type="evidence at protein level"/>
<dbReference type="EMBL" id="DQ336137">
    <property type="protein sequence ID" value="ABC69297.1"/>
    <property type="molecule type" value="mRNA"/>
</dbReference>
<dbReference type="EMBL" id="AK006446">
    <property type="protein sequence ID" value="BAB24593.1"/>
    <property type="molecule type" value="mRNA"/>
</dbReference>
<dbReference type="EMBL" id="AL732611">
    <property type="status" value="NOT_ANNOTATED_CDS"/>
    <property type="molecule type" value="Genomic_DNA"/>
</dbReference>
<dbReference type="EMBL" id="AL954716">
    <property type="status" value="NOT_ANNOTATED_CDS"/>
    <property type="molecule type" value="Genomic_DNA"/>
</dbReference>
<dbReference type="EMBL" id="BC089517">
    <property type="protein sequence ID" value="AAH89517.1"/>
    <property type="molecule type" value="mRNA"/>
</dbReference>
<dbReference type="CCDS" id="CCDS18362.1">
    <molecule id="Q9D9V2-1"/>
</dbReference>
<dbReference type="CCDS" id="CCDS71422.1">
    <molecule id="Q9D9V2-2"/>
</dbReference>
<dbReference type="RefSeq" id="NP_001277552.1">
    <molecule id="Q9D9V2-2"/>
    <property type="nucleotide sequence ID" value="NM_001290623.1"/>
</dbReference>
<dbReference type="RefSeq" id="NP_081365.2">
    <molecule id="Q9D9V2-1"/>
    <property type="nucleotide sequence ID" value="NM_027089.4"/>
</dbReference>
<dbReference type="SMR" id="Q9D9V2"/>
<dbReference type="FunCoup" id="Q9D9V2">
    <property type="interactions" value="53"/>
</dbReference>
<dbReference type="STRING" id="10090.ENSMUSP00000030309"/>
<dbReference type="GlyCosmos" id="Q9D9V2">
    <property type="glycosylation" value="1 site, No reported glycans"/>
</dbReference>
<dbReference type="GlyGen" id="Q9D9V2">
    <property type="glycosylation" value="2 sites"/>
</dbReference>
<dbReference type="PhosphoSitePlus" id="Q9D9V2"/>
<dbReference type="PaxDb" id="10090-ENSMUSP00000030309"/>
<dbReference type="ProteomicsDB" id="275876">
    <molecule id="Q9D9V2-1"/>
</dbReference>
<dbReference type="ProteomicsDB" id="275877">
    <molecule id="Q9D9V2-2"/>
</dbReference>
<dbReference type="Antibodypedia" id="2383">
    <property type="antibodies" value="24 antibodies from 13 providers"/>
</dbReference>
<dbReference type="Ensembl" id="ENSMUST00000030309.6">
    <molecule id="Q9D9V2-1"/>
    <property type="protein sequence ID" value="ENSMUSP00000030309.6"/>
    <property type="gene ID" value="ENSMUSG00000028575.12"/>
</dbReference>
<dbReference type="Ensembl" id="ENSMUST00000107097.9">
    <molecule id="Q9D9V2-2"/>
    <property type="protein sequence ID" value="ENSMUSP00000102714.3"/>
    <property type="gene ID" value="ENSMUSG00000028575.12"/>
</dbReference>
<dbReference type="GeneID" id="67753"/>
<dbReference type="KEGG" id="mmu:67753"/>
<dbReference type="UCSC" id="uc008tsl.3">
    <molecule id="Q9D9V2-2"/>
    <property type="organism name" value="mouse"/>
</dbReference>
<dbReference type="UCSC" id="uc008tsm.2">
    <molecule id="Q9D9V2-1"/>
    <property type="organism name" value="mouse"/>
</dbReference>
<dbReference type="AGR" id="MGI:1915003"/>
<dbReference type="CTD" id="54586"/>
<dbReference type="MGI" id="MGI:1915003">
    <property type="gene designation" value="Eqtn"/>
</dbReference>
<dbReference type="VEuPathDB" id="HostDB:ENSMUSG00000028575"/>
<dbReference type="eggNOG" id="KOG2248">
    <property type="taxonomic scope" value="Eukaryota"/>
</dbReference>
<dbReference type="GeneTree" id="ENSGT00390000010786"/>
<dbReference type="HOGENOM" id="CLU_082439_0_0_1"/>
<dbReference type="InParanoid" id="Q9D9V2"/>
<dbReference type="OMA" id="SHKNIQR"/>
<dbReference type="OrthoDB" id="9530648at2759"/>
<dbReference type="PhylomeDB" id="Q9D9V2"/>
<dbReference type="TreeFam" id="TF337449"/>
<dbReference type="BioGRID-ORCS" id="67753">
    <property type="hits" value="0 hits in 76 CRISPR screens"/>
</dbReference>
<dbReference type="ChiTaRS" id="Eqtn">
    <property type="organism name" value="mouse"/>
</dbReference>
<dbReference type="PRO" id="PR:Q9D9V2"/>
<dbReference type="Proteomes" id="UP000000589">
    <property type="component" value="Chromosome 4"/>
</dbReference>
<dbReference type="RNAct" id="Q9D9V2">
    <property type="molecule type" value="protein"/>
</dbReference>
<dbReference type="Bgee" id="ENSMUSG00000028575">
    <property type="expression patterns" value="Expressed in spermatid and 30 other cell types or tissues"/>
</dbReference>
<dbReference type="GO" id="GO:0002080">
    <property type="term" value="C:acrosomal membrane"/>
    <property type="evidence" value="ECO:0000314"/>
    <property type="project" value="MGI"/>
</dbReference>
<dbReference type="GO" id="GO:0005737">
    <property type="term" value="C:cytoplasm"/>
    <property type="evidence" value="ECO:0000314"/>
    <property type="project" value="MGI"/>
</dbReference>
<dbReference type="GO" id="GO:0005769">
    <property type="term" value="C:early endosome"/>
    <property type="evidence" value="ECO:0000314"/>
    <property type="project" value="MGI"/>
</dbReference>
<dbReference type="GO" id="GO:0002079">
    <property type="term" value="C:inner acrosomal membrane"/>
    <property type="evidence" value="ECO:0000314"/>
    <property type="project" value="MGI"/>
</dbReference>
<dbReference type="GO" id="GO:0005634">
    <property type="term" value="C:nucleus"/>
    <property type="evidence" value="ECO:0000314"/>
    <property type="project" value="MGI"/>
</dbReference>
<dbReference type="GO" id="GO:0002081">
    <property type="term" value="C:outer acrosomal membrane"/>
    <property type="evidence" value="ECO:0000314"/>
    <property type="project" value="UniProtKB"/>
</dbReference>
<dbReference type="GO" id="GO:0005886">
    <property type="term" value="C:plasma membrane"/>
    <property type="evidence" value="ECO:0000314"/>
    <property type="project" value="MGI"/>
</dbReference>
<dbReference type="GO" id="GO:0060478">
    <property type="term" value="P:acrosomal vesicle exocytosis"/>
    <property type="evidence" value="ECO:0000315"/>
    <property type="project" value="MGI"/>
</dbReference>
<dbReference type="GO" id="GO:0001675">
    <property type="term" value="P:acrosome assembly"/>
    <property type="evidence" value="ECO:0000304"/>
    <property type="project" value="MGI"/>
</dbReference>
<dbReference type="GO" id="GO:0006897">
    <property type="term" value="P:endocytosis"/>
    <property type="evidence" value="ECO:0000314"/>
    <property type="project" value="MGI"/>
</dbReference>
<dbReference type="GO" id="GO:0051649">
    <property type="term" value="P:establishment of localization in cell"/>
    <property type="evidence" value="ECO:0000315"/>
    <property type="project" value="MGI"/>
</dbReference>
<dbReference type="GO" id="GO:0007342">
    <property type="term" value="P:fusion of sperm to egg plasma membrane involved in single fertilization"/>
    <property type="evidence" value="ECO:0000315"/>
    <property type="project" value="MGI"/>
</dbReference>
<dbReference type="InterPro" id="IPR029282">
    <property type="entry name" value="Eqtn/Afaf"/>
</dbReference>
<dbReference type="PANTHER" id="PTHR36874">
    <property type="entry name" value="EQUATORIN"/>
    <property type="match status" value="1"/>
</dbReference>
<dbReference type="PANTHER" id="PTHR36874:SF1">
    <property type="entry name" value="EQUATORIN"/>
    <property type="match status" value="1"/>
</dbReference>
<dbReference type="Pfam" id="PF15339">
    <property type="entry name" value="Afaf"/>
    <property type="match status" value="1"/>
</dbReference>
<sequence length="337" mass="37764">MDFILLIILSGVFLPDIISLQPIVGQEPGVTLSDEEQYYADEENNTDGNSVALHKLEENEMDTPANEKTGNYYKDIKQYVFTTPNIKGSEVSVTATTNLEFAVKKNYKASKPTASGEEEKPSESSRKTSTPNIPAFWTILSKAVNETAVSMDDKDQFFQPIPASDLNATNEDKLSELEEIKLKLMLGISLMTLVLLIPLLIFCFATLYKLRHLRDKSYESQYSINPELATLSYFHPTEGVSDTSFSKSADSNSYWVHNSSEMRRSRTRRSKSKPMDFSAGSNQTVLTDESSFLPPEETRFLLPEEPGKELIVERGPMQAMNEIDAQLLLNKEGSPSN</sequence>
<accession>Q9D9V2</accession>
<accession>A2AJE0</accession>
<accession>Q2LCV5</accession>
<accession>Q5FWB0</accession>